<accession>O25956</accession>
<organism>
    <name type="scientific">Helicobacter pylori (strain ATCC 700392 / 26695)</name>
    <name type="common">Campylobacter pylori</name>
    <dbReference type="NCBI Taxonomy" id="85962"/>
    <lineage>
        <taxon>Bacteria</taxon>
        <taxon>Pseudomonadati</taxon>
        <taxon>Campylobacterota</taxon>
        <taxon>Epsilonproteobacteria</taxon>
        <taxon>Campylobacterales</taxon>
        <taxon>Helicobacteraceae</taxon>
        <taxon>Helicobacter</taxon>
    </lineage>
</organism>
<comment type="function">
    <text evidence="1">Catalyzes the conversion of dethiobiotin (DTB) to biotin by the insertion of a sulfur atom into dethiobiotin via a radical-based mechanism.</text>
</comment>
<comment type="catalytic activity">
    <reaction evidence="1">
        <text>(4R,5S)-dethiobiotin + (sulfur carrier)-SH + 2 reduced [2Fe-2S]-[ferredoxin] + 2 S-adenosyl-L-methionine = (sulfur carrier)-H + biotin + 2 5'-deoxyadenosine + 2 L-methionine + 2 oxidized [2Fe-2S]-[ferredoxin]</text>
        <dbReference type="Rhea" id="RHEA:22060"/>
        <dbReference type="Rhea" id="RHEA-COMP:10000"/>
        <dbReference type="Rhea" id="RHEA-COMP:10001"/>
        <dbReference type="Rhea" id="RHEA-COMP:14737"/>
        <dbReference type="Rhea" id="RHEA-COMP:14739"/>
        <dbReference type="ChEBI" id="CHEBI:17319"/>
        <dbReference type="ChEBI" id="CHEBI:29917"/>
        <dbReference type="ChEBI" id="CHEBI:33737"/>
        <dbReference type="ChEBI" id="CHEBI:33738"/>
        <dbReference type="ChEBI" id="CHEBI:57586"/>
        <dbReference type="ChEBI" id="CHEBI:57844"/>
        <dbReference type="ChEBI" id="CHEBI:59789"/>
        <dbReference type="ChEBI" id="CHEBI:64428"/>
        <dbReference type="ChEBI" id="CHEBI:149473"/>
        <dbReference type="EC" id="2.8.1.6"/>
    </reaction>
</comment>
<comment type="cofactor">
    <cofactor evidence="1">
        <name>[4Fe-4S] cluster</name>
        <dbReference type="ChEBI" id="CHEBI:49883"/>
    </cofactor>
    <text evidence="1">Binds 1 [4Fe-4S] cluster. The cluster is coordinated with 3 cysteines and an exchangeable S-adenosyl-L-methionine.</text>
</comment>
<comment type="cofactor">
    <cofactor evidence="1">
        <name>[2Fe-2S] cluster</name>
        <dbReference type="ChEBI" id="CHEBI:190135"/>
    </cofactor>
    <text evidence="1">Binds 1 [2Fe-2S] cluster. The cluster is coordinated with 3 cysteines and 1 arginine.</text>
</comment>
<comment type="pathway">
    <text evidence="1">Cofactor biosynthesis; biotin biosynthesis; biotin from 7,8-diaminononanoate: step 2/2.</text>
</comment>
<comment type="subunit">
    <text evidence="1">Homodimer.</text>
</comment>
<comment type="similarity">
    <text evidence="1">Belongs to the radical SAM superfamily. Biotin synthase family.</text>
</comment>
<keyword id="KW-0001">2Fe-2S</keyword>
<keyword id="KW-0004">4Fe-4S</keyword>
<keyword id="KW-0093">Biotin biosynthesis</keyword>
<keyword id="KW-0408">Iron</keyword>
<keyword id="KW-0411">Iron-sulfur</keyword>
<keyword id="KW-0479">Metal-binding</keyword>
<keyword id="KW-1185">Reference proteome</keyword>
<keyword id="KW-0949">S-adenosyl-L-methionine</keyword>
<keyword id="KW-0808">Transferase</keyword>
<proteinExistence type="inferred from homology"/>
<reference key="1">
    <citation type="journal article" date="1997" name="Nature">
        <title>The complete genome sequence of the gastric pathogen Helicobacter pylori.</title>
        <authorList>
            <person name="Tomb J.-F."/>
            <person name="White O."/>
            <person name="Kerlavage A.R."/>
            <person name="Clayton R.A."/>
            <person name="Sutton G.G."/>
            <person name="Fleischmann R.D."/>
            <person name="Ketchum K.A."/>
            <person name="Klenk H.-P."/>
            <person name="Gill S.R."/>
            <person name="Dougherty B.A."/>
            <person name="Nelson K.E."/>
            <person name="Quackenbush J."/>
            <person name="Zhou L."/>
            <person name="Kirkness E.F."/>
            <person name="Peterson S.N."/>
            <person name="Loftus B.J."/>
            <person name="Richardson D.L."/>
            <person name="Dodson R.J."/>
            <person name="Khalak H.G."/>
            <person name="Glodek A."/>
            <person name="McKenney K."/>
            <person name="FitzGerald L.M."/>
            <person name="Lee N."/>
            <person name="Adams M.D."/>
            <person name="Hickey E.K."/>
            <person name="Berg D.E."/>
            <person name="Gocayne J.D."/>
            <person name="Utterback T.R."/>
            <person name="Peterson J.D."/>
            <person name="Kelley J.M."/>
            <person name="Cotton M.D."/>
            <person name="Weidman J.F."/>
            <person name="Fujii C."/>
            <person name="Bowman C."/>
            <person name="Watthey L."/>
            <person name="Wallin E."/>
            <person name="Hayes W.S."/>
            <person name="Borodovsky M."/>
            <person name="Karp P.D."/>
            <person name="Smith H.O."/>
            <person name="Fraser C.M."/>
            <person name="Venter J.C."/>
        </authorList>
    </citation>
    <scope>NUCLEOTIDE SEQUENCE [LARGE SCALE GENOMIC DNA]</scope>
    <source>
        <strain>ATCC 700392 / 26695</strain>
    </source>
</reference>
<name>BIOB_HELPY</name>
<protein>
    <recommendedName>
        <fullName evidence="1">Biotin synthase</fullName>
        <ecNumber evidence="1">2.8.1.6</ecNumber>
    </recommendedName>
</protein>
<gene>
    <name evidence="1" type="primary">bioB</name>
    <name type="ordered locus">HP_1406</name>
</gene>
<feature type="chain" id="PRO_0000185555" description="Biotin synthase">
    <location>
        <begin position="1"/>
        <end position="282"/>
    </location>
</feature>
<feature type="domain" description="Radical SAM core" evidence="2">
    <location>
        <begin position="1"/>
        <end position="228"/>
    </location>
</feature>
<feature type="binding site" evidence="1">
    <location>
        <position position="17"/>
    </location>
    <ligand>
        <name>[4Fe-4S] cluster</name>
        <dbReference type="ChEBI" id="CHEBI:49883"/>
        <note>4Fe-4S-S-AdoMet</note>
    </ligand>
</feature>
<feature type="binding site" evidence="1">
    <location>
        <position position="21"/>
    </location>
    <ligand>
        <name>[4Fe-4S] cluster</name>
        <dbReference type="ChEBI" id="CHEBI:49883"/>
        <note>4Fe-4S-S-AdoMet</note>
    </ligand>
</feature>
<feature type="binding site" evidence="1">
    <location>
        <position position="24"/>
    </location>
    <ligand>
        <name>[4Fe-4S] cluster</name>
        <dbReference type="ChEBI" id="CHEBI:49883"/>
        <note>4Fe-4S-S-AdoMet</note>
    </ligand>
</feature>
<feature type="binding site" evidence="1">
    <location>
        <position position="61"/>
    </location>
    <ligand>
        <name>[2Fe-2S] cluster</name>
        <dbReference type="ChEBI" id="CHEBI:190135"/>
    </ligand>
</feature>
<feature type="binding site" evidence="1">
    <location>
        <position position="96"/>
    </location>
    <ligand>
        <name>[2Fe-2S] cluster</name>
        <dbReference type="ChEBI" id="CHEBI:190135"/>
    </ligand>
</feature>
<feature type="binding site" evidence="1">
    <location>
        <position position="154"/>
    </location>
    <ligand>
        <name>[2Fe-2S] cluster</name>
        <dbReference type="ChEBI" id="CHEBI:190135"/>
    </ligand>
</feature>
<feature type="binding site" evidence="1">
    <location>
        <position position="221"/>
    </location>
    <ligand>
        <name>[2Fe-2S] cluster</name>
        <dbReference type="ChEBI" id="CHEBI:190135"/>
    </ligand>
</feature>
<dbReference type="EC" id="2.8.1.6" evidence="1"/>
<dbReference type="EMBL" id="AE000511">
    <property type="protein sequence ID" value="AAD08448.1"/>
    <property type="molecule type" value="Genomic_DNA"/>
</dbReference>
<dbReference type="PIR" id="F64695">
    <property type="entry name" value="F64695"/>
</dbReference>
<dbReference type="RefSeq" id="NP_208197.1">
    <property type="nucleotide sequence ID" value="NC_000915.1"/>
</dbReference>
<dbReference type="RefSeq" id="WP_001155649.1">
    <property type="nucleotide sequence ID" value="NC_018939.1"/>
</dbReference>
<dbReference type="SMR" id="O25956"/>
<dbReference type="DIP" id="DIP-3241N"/>
<dbReference type="FunCoup" id="O25956">
    <property type="interactions" value="253"/>
</dbReference>
<dbReference type="IntAct" id="O25956">
    <property type="interactions" value="4"/>
</dbReference>
<dbReference type="MINT" id="O25956"/>
<dbReference type="STRING" id="85962.HP_1406"/>
<dbReference type="PaxDb" id="85962-C694_07270"/>
<dbReference type="EnsemblBacteria" id="AAD08448">
    <property type="protein sequence ID" value="AAD08448"/>
    <property type="gene ID" value="HP_1406"/>
</dbReference>
<dbReference type="KEGG" id="heo:C694_07270"/>
<dbReference type="KEGG" id="hpy:HP_1406"/>
<dbReference type="PATRIC" id="fig|85962.47.peg.1507"/>
<dbReference type="eggNOG" id="COG0502">
    <property type="taxonomic scope" value="Bacteria"/>
</dbReference>
<dbReference type="InParanoid" id="O25956"/>
<dbReference type="OrthoDB" id="9786826at2"/>
<dbReference type="PhylomeDB" id="O25956"/>
<dbReference type="UniPathway" id="UPA00078">
    <property type="reaction ID" value="UER00162"/>
</dbReference>
<dbReference type="Proteomes" id="UP000000429">
    <property type="component" value="Chromosome"/>
</dbReference>
<dbReference type="GO" id="GO:0051537">
    <property type="term" value="F:2 iron, 2 sulfur cluster binding"/>
    <property type="evidence" value="ECO:0000318"/>
    <property type="project" value="GO_Central"/>
</dbReference>
<dbReference type="GO" id="GO:0051539">
    <property type="term" value="F:4 iron, 4 sulfur cluster binding"/>
    <property type="evidence" value="ECO:0007669"/>
    <property type="project" value="UniProtKB-KW"/>
</dbReference>
<dbReference type="GO" id="GO:0004076">
    <property type="term" value="F:biotin synthase activity"/>
    <property type="evidence" value="ECO:0000318"/>
    <property type="project" value="GO_Central"/>
</dbReference>
<dbReference type="GO" id="GO:0005506">
    <property type="term" value="F:iron ion binding"/>
    <property type="evidence" value="ECO:0007669"/>
    <property type="project" value="UniProtKB-UniRule"/>
</dbReference>
<dbReference type="GO" id="GO:0009102">
    <property type="term" value="P:biotin biosynthetic process"/>
    <property type="evidence" value="ECO:0000318"/>
    <property type="project" value="GO_Central"/>
</dbReference>
<dbReference type="CDD" id="cd01335">
    <property type="entry name" value="Radical_SAM"/>
    <property type="match status" value="1"/>
</dbReference>
<dbReference type="FunFam" id="3.20.20.70:FF:000158">
    <property type="entry name" value="Biotin synthase"/>
    <property type="match status" value="1"/>
</dbReference>
<dbReference type="Gene3D" id="3.20.20.70">
    <property type="entry name" value="Aldolase class I"/>
    <property type="match status" value="1"/>
</dbReference>
<dbReference type="HAMAP" id="MF_01694">
    <property type="entry name" value="BioB"/>
    <property type="match status" value="1"/>
</dbReference>
<dbReference type="InterPro" id="IPR013785">
    <property type="entry name" value="Aldolase_TIM"/>
</dbReference>
<dbReference type="InterPro" id="IPR010722">
    <property type="entry name" value="BATS_dom"/>
</dbReference>
<dbReference type="InterPro" id="IPR002684">
    <property type="entry name" value="Biotin_synth/BioAB"/>
</dbReference>
<dbReference type="InterPro" id="IPR024177">
    <property type="entry name" value="Biotin_synthase"/>
</dbReference>
<dbReference type="InterPro" id="IPR006638">
    <property type="entry name" value="Elp3/MiaA/NifB-like_rSAM"/>
</dbReference>
<dbReference type="InterPro" id="IPR007197">
    <property type="entry name" value="rSAM"/>
</dbReference>
<dbReference type="NCBIfam" id="TIGR00433">
    <property type="entry name" value="bioB"/>
    <property type="match status" value="1"/>
</dbReference>
<dbReference type="NCBIfam" id="NF006308">
    <property type="entry name" value="PRK08508.1"/>
    <property type="match status" value="1"/>
</dbReference>
<dbReference type="PANTHER" id="PTHR22976">
    <property type="entry name" value="BIOTIN SYNTHASE"/>
    <property type="match status" value="1"/>
</dbReference>
<dbReference type="PANTHER" id="PTHR22976:SF2">
    <property type="entry name" value="BIOTIN SYNTHASE, MITOCHONDRIAL"/>
    <property type="match status" value="1"/>
</dbReference>
<dbReference type="Pfam" id="PF06968">
    <property type="entry name" value="BATS"/>
    <property type="match status" value="1"/>
</dbReference>
<dbReference type="Pfam" id="PF04055">
    <property type="entry name" value="Radical_SAM"/>
    <property type="match status" value="1"/>
</dbReference>
<dbReference type="PIRSF" id="PIRSF001619">
    <property type="entry name" value="Biotin_synth"/>
    <property type="match status" value="1"/>
</dbReference>
<dbReference type="SFLD" id="SFLDG01060">
    <property type="entry name" value="BATS_domain_containing"/>
    <property type="match status" value="1"/>
</dbReference>
<dbReference type="SFLD" id="SFLDG01278">
    <property type="entry name" value="biotin_synthase_like"/>
    <property type="match status" value="1"/>
</dbReference>
<dbReference type="SMART" id="SM00876">
    <property type="entry name" value="BATS"/>
    <property type="match status" value="1"/>
</dbReference>
<dbReference type="SMART" id="SM00729">
    <property type="entry name" value="Elp3"/>
    <property type="match status" value="1"/>
</dbReference>
<dbReference type="SUPFAM" id="SSF102114">
    <property type="entry name" value="Radical SAM enzymes"/>
    <property type="match status" value="1"/>
</dbReference>
<dbReference type="PROSITE" id="PS51918">
    <property type="entry name" value="RADICAL_SAM"/>
    <property type="match status" value="1"/>
</dbReference>
<evidence type="ECO:0000255" key="1">
    <source>
        <dbReference type="HAMAP-Rule" id="MF_01694"/>
    </source>
</evidence>
<evidence type="ECO:0000255" key="2">
    <source>
        <dbReference type="PROSITE-ProRule" id="PRU01266"/>
    </source>
</evidence>
<sequence>MQEIFLCSISNVRSGDCKEDCAYCTQSSHHQGAIKRYKFKDEKVVLQEARALRQLGALGFCLVTSGRELDDEKCEYIAKLAKAINQEELGLHLIACCGRADLEQLEFLRDAGIHSYNHNLETSQNFFPKICSTHTWEERFITCENALRAGLGLCSGGIFGLNESWEDRIEMLRALASLSPHTTPINFFIKNPVLPIDAETLSADEALECVLLAKEFLPNARLMVAGGREVVFKDNDKKEAKLFEYGINAVVLGDYLTTKGKAPKKDIEKLLSYGLTMATSCH</sequence>